<comment type="function">
    <text>The proteasome is a multicatalytic proteinase complex which is characterized by its ability to cleave peptides with Arg, Phe, Tyr, Leu, and Glu adjacent to the leaving group at neutral or slightly basic pH. The proteasome has an ATP-dependent proteolytic activity.</text>
</comment>
<comment type="catalytic activity">
    <reaction>
        <text>Cleavage of peptide bonds with very broad specificity.</text>
        <dbReference type="EC" id="3.4.25.1"/>
    </reaction>
</comment>
<comment type="subunit">
    <text evidence="3 4 5">Component of the 20S core complex of the 26S proteasome. The 26S proteasome is composed of a core protease (CP), known as the 20S proteasome, capped at one or both ends by the 19S regulatory particle (RP/PA700). The 20S proteasome core is composed of 28 subunits that are arranged in four stacked rings, resulting in a barrel-shaped structure. The two end rings are each formed by seven alpha subunits, and the two central rings are each formed by seven beta subunits. The catalytic chamber with the active sites is on the inside of the barrel.</text>
</comment>
<comment type="interaction">
    <interactant intactId="EBI-594167">
        <id>Q8LD27</id>
    </interactant>
    <interactant intactId="EBI-25506855">
        <id>O23160</id>
        <label>MYB73</label>
    </interactant>
    <organismsDiffer>false</organismsDiffer>
    <experiments>3</experiments>
</comment>
<comment type="subcellular location">
    <subcellularLocation>
        <location evidence="2">Cytoplasm</location>
    </subcellularLocation>
    <subcellularLocation>
        <location evidence="1">Nucleus</location>
    </subcellularLocation>
</comment>
<comment type="alternative products">
    <event type="alternative splicing"/>
    <isoform>
        <id>Q8LD27-1</id>
        <name>1</name>
        <sequence type="displayed"/>
    </isoform>
    <text>A number of isoforms are produced. According to EST sequences.</text>
</comment>
<comment type="similarity">
    <text evidence="2">Belongs to the peptidase T1B family.</text>
</comment>
<comment type="sequence caution" evidence="6">
    <conflict type="erroneous initiation">
        <sequence resource="EMBL-CDS" id="AAM64316"/>
    </conflict>
    <text>Truncated N-terminus.</text>
</comment>
<name>PSB6_ARATH</name>
<protein>
    <recommendedName>
        <fullName>Proteasome subunit beta type-6</fullName>
        <ecNumber>3.4.25.1</ecNumber>
    </recommendedName>
    <alternativeName>
        <fullName>20S proteasome beta subunit A-1</fullName>
    </alternativeName>
    <alternativeName>
        <fullName>Proteasome component D</fullName>
    </alternativeName>
    <alternativeName>
        <fullName>Proteasome subunit beta type-1</fullName>
    </alternativeName>
</protein>
<dbReference type="EC" id="3.4.25.1"/>
<dbReference type="EMBL" id="Y13694">
    <property type="protein sequence ID" value="CAA74028.1"/>
    <property type="molecule type" value="mRNA"/>
</dbReference>
<dbReference type="EMBL" id="AF043529">
    <property type="protein sequence ID" value="AAC32065.1"/>
    <property type="molecule type" value="mRNA"/>
</dbReference>
<dbReference type="EMBL" id="AL021633">
    <property type="protein sequence ID" value="CAA16533.1"/>
    <property type="molecule type" value="Genomic_DNA"/>
</dbReference>
<dbReference type="EMBL" id="AL161578">
    <property type="protein sequence ID" value="CAB79848.1"/>
    <property type="molecule type" value="Genomic_DNA"/>
</dbReference>
<dbReference type="EMBL" id="CP002687">
    <property type="protein sequence ID" value="AEE85887.1"/>
    <property type="molecule type" value="Genomic_DNA"/>
</dbReference>
<dbReference type="EMBL" id="CP002687">
    <property type="protein sequence ID" value="AEE85889.1"/>
    <property type="molecule type" value="Genomic_DNA"/>
</dbReference>
<dbReference type="EMBL" id="AY052354">
    <property type="protein sequence ID" value="AAK96545.1"/>
    <property type="molecule type" value="mRNA"/>
</dbReference>
<dbReference type="EMBL" id="AY058240">
    <property type="protein sequence ID" value="AAL15414.1"/>
    <property type="molecule type" value="mRNA"/>
</dbReference>
<dbReference type="EMBL" id="AY086241">
    <property type="protein sequence ID" value="AAM64316.1"/>
    <property type="status" value="ALT_INIT"/>
    <property type="molecule type" value="mRNA"/>
</dbReference>
<dbReference type="PIR" id="T04497">
    <property type="entry name" value="T04497"/>
</dbReference>
<dbReference type="RefSeq" id="NP_001190879.1">
    <molecule id="Q8LD27-1"/>
    <property type="nucleotide sequence ID" value="NM_001203950.1"/>
</dbReference>
<dbReference type="RefSeq" id="NP_194858.1">
    <molecule id="Q8LD27-1"/>
    <property type="nucleotide sequence ID" value="NM_119279.5"/>
</dbReference>
<dbReference type="SMR" id="Q8LD27"/>
<dbReference type="BioGRID" id="14543">
    <property type="interactions" value="71"/>
</dbReference>
<dbReference type="FunCoup" id="Q8LD27">
    <property type="interactions" value="4381"/>
</dbReference>
<dbReference type="IntAct" id="Q8LD27">
    <property type="interactions" value="3"/>
</dbReference>
<dbReference type="STRING" id="3702.Q8LD27"/>
<dbReference type="MEROPS" id="T01.010"/>
<dbReference type="iPTMnet" id="Q8LD27"/>
<dbReference type="PaxDb" id="3702-AT4G31300.2"/>
<dbReference type="ProteomicsDB" id="225992">
    <molecule id="Q8LD27-1"/>
</dbReference>
<dbReference type="EnsemblPlants" id="AT4G31300.1">
    <molecule id="Q8LD27-1"/>
    <property type="protein sequence ID" value="AT4G31300.1"/>
    <property type="gene ID" value="AT4G31300"/>
</dbReference>
<dbReference type="EnsemblPlants" id="AT4G31300.3">
    <molecule id="Q8LD27-1"/>
    <property type="protein sequence ID" value="AT4G31300.3"/>
    <property type="gene ID" value="AT4G31300"/>
</dbReference>
<dbReference type="GeneID" id="829257"/>
<dbReference type="Gramene" id="AT4G31300.1">
    <molecule id="Q8LD27-1"/>
    <property type="protein sequence ID" value="AT4G31300.1"/>
    <property type="gene ID" value="AT4G31300"/>
</dbReference>
<dbReference type="Gramene" id="AT4G31300.3">
    <molecule id="Q8LD27-1"/>
    <property type="protein sequence ID" value="AT4G31300.3"/>
    <property type="gene ID" value="AT4G31300"/>
</dbReference>
<dbReference type="KEGG" id="ath:AT4G31300"/>
<dbReference type="Araport" id="AT4G31300"/>
<dbReference type="TAIR" id="AT4G31300">
    <property type="gene designation" value="PBA1"/>
</dbReference>
<dbReference type="eggNOG" id="KOG0174">
    <property type="taxonomic scope" value="Eukaryota"/>
</dbReference>
<dbReference type="InParanoid" id="Q8LD27"/>
<dbReference type="OrthoDB" id="1501730at2759"/>
<dbReference type="PhylomeDB" id="Q8LD27"/>
<dbReference type="CD-CODE" id="4299E36E">
    <property type="entry name" value="Nucleolus"/>
</dbReference>
<dbReference type="PRO" id="PR:Q8LD27"/>
<dbReference type="Proteomes" id="UP000006548">
    <property type="component" value="Chromosome 4"/>
</dbReference>
<dbReference type="ExpressionAtlas" id="Q8LD27">
    <property type="expression patterns" value="baseline and differential"/>
</dbReference>
<dbReference type="GO" id="GO:0005737">
    <property type="term" value="C:cytoplasm"/>
    <property type="evidence" value="ECO:0007669"/>
    <property type="project" value="UniProtKB-SubCell"/>
</dbReference>
<dbReference type="GO" id="GO:0005634">
    <property type="term" value="C:nucleus"/>
    <property type="evidence" value="ECO:0007669"/>
    <property type="project" value="UniProtKB-SubCell"/>
</dbReference>
<dbReference type="GO" id="GO:0019774">
    <property type="term" value="C:proteasome core complex, beta-subunit complex"/>
    <property type="evidence" value="ECO:0000250"/>
    <property type="project" value="UniProtKB"/>
</dbReference>
<dbReference type="GO" id="GO:0004298">
    <property type="term" value="F:threonine-type endopeptidase activity"/>
    <property type="evidence" value="ECO:0007669"/>
    <property type="project" value="UniProtKB-KW"/>
</dbReference>
<dbReference type="GO" id="GO:0051603">
    <property type="term" value="P:proteolysis involved in protein catabolic process"/>
    <property type="evidence" value="ECO:0007669"/>
    <property type="project" value="InterPro"/>
</dbReference>
<dbReference type="CDD" id="cd03762">
    <property type="entry name" value="proteasome_beta_type_6"/>
    <property type="match status" value="1"/>
</dbReference>
<dbReference type="FunFam" id="3.60.20.10:FF:000035">
    <property type="entry name" value="Proteasome subunit beta"/>
    <property type="match status" value="1"/>
</dbReference>
<dbReference type="Gene3D" id="3.60.20.10">
    <property type="entry name" value="Glutamine Phosphoribosylpyrophosphate, subunit 1, domain 1"/>
    <property type="match status" value="1"/>
</dbReference>
<dbReference type="InterPro" id="IPR029055">
    <property type="entry name" value="Ntn_hydrolases_N"/>
</dbReference>
<dbReference type="InterPro" id="IPR000243">
    <property type="entry name" value="Pept_T1A_subB"/>
</dbReference>
<dbReference type="InterPro" id="IPR016050">
    <property type="entry name" value="Proteasome_bsu_CS"/>
</dbReference>
<dbReference type="InterPro" id="IPR001353">
    <property type="entry name" value="Proteasome_sua/b"/>
</dbReference>
<dbReference type="InterPro" id="IPR023333">
    <property type="entry name" value="Proteasome_suB-type"/>
</dbReference>
<dbReference type="PANTHER" id="PTHR32194:SF0">
    <property type="entry name" value="ATP-DEPENDENT PROTEASE SUBUNIT HSLV"/>
    <property type="match status" value="1"/>
</dbReference>
<dbReference type="PANTHER" id="PTHR32194">
    <property type="entry name" value="METALLOPROTEASE TLDD"/>
    <property type="match status" value="1"/>
</dbReference>
<dbReference type="Pfam" id="PF00227">
    <property type="entry name" value="Proteasome"/>
    <property type="match status" value="1"/>
</dbReference>
<dbReference type="PRINTS" id="PR00141">
    <property type="entry name" value="PROTEASOME"/>
</dbReference>
<dbReference type="SUPFAM" id="SSF56235">
    <property type="entry name" value="N-terminal nucleophile aminohydrolases (Ntn hydrolases)"/>
    <property type="match status" value="1"/>
</dbReference>
<dbReference type="PROSITE" id="PS00854">
    <property type="entry name" value="PROTEASOME_BETA_1"/>
    <property type="match status" value="1"/>
</dbReference>
<dbReference type="PROSITE" id="PS51476">
    <property type="entry name" value="PROTEASOME_BETA_2"/>
    <property type="match status" value="1"/>
</dbReference>
<gene>
    <name type="primary">PBA1</name>
    <name type="synonym">PRCD</name>
    <name type="ordered locus">At4g31300</name>
    <name type="ORF">F8F16.120</name>
</gene>
<sequence length="233" mass="25151">MDLNLDAPHSMGTTIIGVTYNGGVVLGADSRTSTGMYVANRASDKITQLTDNVYVCRSGSAADSQVVSDYVRYFLHQHTIQHGQPATVKVSANLIRMLAYNNKNMLQTGLIVGGWDKYEGGKIYGIPLGGTVVEQPFAIGGSGSSYLYGFFDQAWKDNMTKEEAEQLVVKAVSLAIARDGASGGVVRTVIINSEGVTRNFYPGDKLQLWHEELEPQNSLLDILNAAGPEPMAM</sequence>
<proteinExistence type="evidence at protein level"/>
<evidence type="ECO:0000250" key="1"/>
<evidence type="ECO:0000255" key="2">
    <source>
        <dbReference type="PROSITE-ProRule" id="PRU00809"/>
    </source>
</evidence>
<evidence type="ECO:0000269" key="3">
    <source>
    </source>
</evidence>
<evidence type="ECO:0000269" key="4">
    <source>
    </source>
</evidence>
<evidence type="ECO:0000269" key="5">
    <source>
    </source>
</evidence>
<evidence type="ECO:0000305" key="6"/>
<accession>Q8LD27</accession>
<accession>O23716</accession>
<keyword id="KW-0025">Alternative splicing</keyword>
<keyword id="KW-0963">Cytoplasm</keyword>
<keyword id="KW-0378">Hydrolase</keyword>
<keyword id="KW-0539">Nucleus</keyword>
<keyword id="KW-0645">Protease</keyword>
<keyword id="KW-0647">Proteasome</keyword>
<keyword id="KW-1185">Reference proteome</keyword>
<keyword id="KW-0888">Threonine protease</keyword>
<keyword id="KW-0865">Zymogen</keyword>
<feature type="propeptide" id="PRO_0000042828" description="Removed in mature form">
    <location>
        <begin position="1"/>
        <end position="12"/>
    </location>
</feature>
<feature type="chain" id="PRO_0000042829" description="Proteasome subunit beta type-6">
    <location>
        <begin position="13"/>
        <end position="233"/>
    </location>
</feature>
<feature type="active site" description="Nucleophile" evidence="1">
    <location>
        <position position="13"/>
    </location>
</feature>
<feature type="sequence conflict" description="In Ref. 6; AAM64316." evidence="6" ref="6">
    <original>Y</original>
    <variation>H</variation>
    <location>
        <position position="73"/>
    </location>
</feature>
<organism>
    <name type="scientific">Arabidopsis thaliana</name>
    <name type="common">Mouse-ear cress</name>
    <dbReference type="NCBI Taxonomy" id="3702"/>
    <lineage>
        <taxon>Eukaryota</taxon>
        <taxon>Viridiplantae</taxon>
        <taxon>Streptophyta</taxon>
        <taxon>Embryophyta</taxon>
        <taxon>Tracheophyta</taxon>
        <taxon>Spermatophyta</taxon>
        <taxon>Magnoliopsida</taxon>
        <taxon>eudicotyledons</taxon>
        <taxon>Gunneridae</taxon>
        <taxon>Pentapetalae</taxon>
        <taxon>rosids</taxon>
        <taxon>malvids</taxon>
        <taxon>Brassicales</taxon>
        <taxon>Brassicaceae</taxon>
        <taxon>Camelineae</taxon>
        <taxon>Arabidopsis</taxon>
    </lineage>
</organism>
<reference key="1">
    <citation type="journal article" date="1997" name="FEBS Lett.">
        <title>The 20S proteasome gene family in Arabidopsis thaliana.</title>
        <authorList>
            <person name="Parmentier Y."/>
            <person name="Bouchez D."/>
            <person name="Fleck J."/>
            <person name="Genschik P."/>
        </authorList>
    </citation>
    <scope>NUCLEOTIDE SEQUENCE [MRNA]</scope>
    <source>
        <strain>cv. Columbia</strain>
    </source>
</reference>
<reference key="2">
    <citation type="journal article" date="1998" name="Genetics">
        <title>Molecular organization of the 20S proteasome gene family from Arabidopsis thaliana.</title>
        <authorList>
            <person name="Fu H."/>
            <person name="Doelling J.H."/>
            <person name="Arendt C.S."/>
            <person name="Hochstrasser M."/>
            <person name="Vierstra R.D."/>
        </authorList>
    </citation>
    <scope>NUCLEOTIDE SEQUENCE [MRNA]</scope>
    <scope>GENE FAMILY</scope>
    <scope>NOMENCLATURE</scope>
    <source>
        <strain>cv. Columbia</strain>
    </source>
</reference>
<reference key="3">
    <citation type="journal article" date="1999" name="Nature">
        <title>Sequence and analysis of chromosome 4 of the plant Arabidopsis thaliana.</title>
        <authorList>
            <person name="Mayer K.F.X."/>
            <person name="Schueller C."/>
            <person name="Wambutt R."/>
            <person name="Murphy G."/>
            <person name="Volckaert G."/>
            <person name="Pohl T."/>
            <person name="Duesterhoeft A."/>
            <person name="Stiekema W."/>
            <person name="Entian K.-D."/>
            <person name="Terryn N."/>
            <person name="Harris B."/>
            <person name="Ansorge W."/>
            <person name="Brandt P."/>
            <person name="Grivell L.A."/>
            <person name="Rieger M."/>
            <person name="Weichselgartner M."/>
            <person name="de Simone V."/>
            <person name="Obermaier B."/>
            <person name="Mache R."/>
            <person name="Mueller M."/>
            <person name="Kreis M."/>
            <person name="Delseny M."/>
            <person name="Puigdomenech P."/>
            <person name="Watson M."/>
            <person name="Schmidtheini T."/>
            <person name="Reichert B."/>
            <person name="Portetelle D."/>
            <person name="Perez-Alonso M."/>
            <person name="Boutry M."/>
            <person name="Bancroft I."/>
            <person name="Vos P."/>
            <person name="Hoheisel J."/>
            <person name="Zimmermann W."/>
            <person name="Wedler H."/>
            <person name="Ridley P."/>
            <person name="Langham S.-A."/>
            <person name="McCullagh B."/>
            <person name="Bilham L."/>
            <person name="Robben J."/>
            <person name="van der Schueren J."/>
            <person name="Grymonprez B."/>
            <person name="Chuang Y.-J."/>
            <person name="Vandenbussche F."/>
            <person name="Braeken M."/>
            <person name="Weltjens I."/>
            <person name="Voet M."/>
            <person name="Bastiaens I."/>
            <person name="Aert R."/>
            <person name="Defoor E."/>
            <person name="Weitzenegger T."/>
            <person name="Bothe G."/>
            <person name="Ramsperger U."/>
            <person name="Hilbert H."/>
            <person name="Braun M."/>
            <person name="Holzer E."/>
            <person name="Brandt A."/>
            <person name="Peters S."/>
            <person name="van Staveren M."/>
            <person name="Dirkse W."/>
            <person name="Mooijman P."/>
            <person name="Klein Lankhorst R."/>
            <person name="Rose M."/>
            <person name="Hauf J."/>
            <person name="Koetter P."/>
            <person name="Berneiser S."/>
            <person name="Hempel S."/>
            <person name="Feldpausch M."/>
            <person name="Lamberth S."/>
            <person name="Van den Daele H."/>
            <person name="De Keyser A."/>
            <person name="Buysshaert C."/>
            <person name="Gielen J."/>
            <person name="Villarroel R."/>
            <person name="De Clercq R."/>
            <person name="van Montagu M."/>
            <person name="Rogers J."/>
            <person name="Cronin A."/>
            <person name="Quail M.A."/>
            <person name="Bray-Allen S."/>
            <person name="Clark L."/>
            <person name="Doggett J."/>
            <person name="Hall S."/>
            <person name="Kay M."/>
            <person name="Lennard N."/>
            <person name="McLay K."/>
            <person name="Mayes R."/>
            <person name="Pettett A."/>
            <person name="Rajandream M.A."/>
            <person name="Lyne M."/>
            <person name="Benes V."/>
            <person name="Rechmann S."/>
            <person name="Borkova D."/>
            <person name="Bloecker H."/>
            <person name="Scharfe M."/>
            <person name="Grimm M."/>
            <person name="Loehnert T.-H."/>
            <person name="Dose S."/>
            <person name="de Haan M."/>
            <person name="Maarse A.C."/>
            <person name="Schaefer M."/>
            <person name="Mueller-Auer S."/>
            <person name="Gabel C."/>
            <person name="Fuchs M."/>
            <person name="Fartmann B."/>
            <person name="Granderath K."/>
            <person name="Dauner D."/>
            <person name="Herzl A."/>
            <person name="Neumann S."/>
            <person name="Argiriou A."/>
            <person name="Vitale D."/>
            <person name="Liguori R."/>
            <person name="Piravandi E."/>
            <person name="Massenet O."/>
            <person name="Quigley F."/>
            <person name="Clabauld G."/>
            <person name="Muendlein A."/>
            <person name="Felber R."/>
            <person name="Schnabl S."/>
            <person name="Hiller R."/>
            <person name="Schmidt W."/>
            <person name="Lecharny A."/>
            <person name="Aubourg S."/>
            <person name="Chefdor F."/>
            <person name="Cooke R."/>
            <person name="Berger C."/>
            <person name="Monfort A."/>
            <person name="Casacuberta E."/>
            <person name="Gibbons T."/>
            <person name="Weber N."/>
            <person name="Vandenbol M."/>
            <person name="Bargues M."/>
            <person name="Terol J."/>
            <person name="Torres A."/>
            <person name="Perez-Perez A."/>
            <person name="Purnelle B."/>
            <person name="Bent E."/>
            <person name="Johnson S."/>
            <person name="Tacon D."/>
            <person name="Jesse T."/>
            <person name="Heijnen L."/>
            <person name="Schwarz S."/>
            <person name="Scholler P."/>
            <person name="Heber S."/>
            <person name="Francs P."/>
            <person name="Bielke C."/>
            <person name="Frishman D."/>
            <person name="Haase D."/>
            <person name="Lemcke K."/>
            <person name="Mewes H.-W."/>
            <person name="Stocker S."/>
            <person name="Zaccaria P."/>
            <person name="Bevan M."/>
            <person name="Wilson R.K."/>
            <person name="de la Bastide M."/>
            <person name="Habermann K."/>
            <person name="Parnell L."/>
            <person name="Dedhia N."/>
            <person name="Gnoj L."/>
            <person name="Schutz K."/>
            <person name="Huang E."/>
            <person name="Spiegel L."/>
            <person name="Sekhon M."/>
            <person name="Murray J."/>
            <person name="Sheet P."/>
            <person name="Cordes M."/>
            <person name="Abu-Threideh J."/>
            <person name="Stoneking T."/>
            <person name="Kalicki J."/>
            <person name="Graves T."/>
            <person name="Harmon G."/>
            <person name="Edwards J."/>
            <person name="Latreille P."/>
            <person name="Courtney L."/>
            <person name="Cloud J."/>
            <person name="Abbott A."/>
            <person name="Scott K."/>
            <person name="Johnson D."/>
            <person name="Minx P."/>
            <person name="Bentley D."/>
            <person name="Fulton B."/>
            <person name="Miller N."/>
            <person name="Greco T."/>
            <person name="Kemp K."/>
            <person name="Kramer J."/>
            <person name="Fulton L."/>
            <person name="Mardis E."/>
            <person name="Dante M."/>
            <person name="Pepin K."/>
            <person name="Hillier L.W."/>
            <person name="Nelson J."/>
            <person name="Spieth J."/>
            <person name="Ryan E."/>
            <person name="Andrews S."/>
            <person name="Geisel C."/>
            <person name="Layman D."/>
            <person name="Du H."/>
            <person name="Ali J."/>
            <person name="Berghoff A."/>
            <person name="Jones K."/>
            <person name="Drone K."/>
            <person name="Cotton M."/>
            <person name="Joshu C."/>
            <person name="Antonoiu B."/>
            <person name="Zidanic M."/>
            <person name="Strong C."/>
            <person name="Sun H."/>
            <person name="Lamar B."/>
            <person name="Yordan C."/>
            <person name="Ma P."/>
            <person name="Zhong J."/>
            <person name="Preston R."/>
            <person name="Vil D."/>
            <person name="Shekher M."/>
            <person name="Matero A."/>
            <person name="Shah R."/>
            <person name="Swaby I.K."/>
            <person name="O'Shaughnessy A."/>
            <person name="Rodriguez M."/>
            <person name="Hoffman J."/>
            <person name="Till S."/>
            <person name="Granat S."/>
            <person name="Shohdy N."/>
            <person name="Hasegawa A."/>
            <person name="Hameed A."/>
            <person name="Lodhi M."/>
            <person name="Johnson A."/>
            <person name="Chen E."/>
            <person name="Marra M.A."/>
            <person name="Martienssen R."/>
            <person name="McCombie W.R."/>
        </authorList>
    </citation>
    <scope>NUCLEOTIDE SEQUENCE [LARGE SCALE GENOMIC DNA]</scope>
    <source>
        <strain>cv. Columbia</strain>
    </source>
</reference>
<reference key="4">
    <citation type="journal article" date="2017" name="Plant J.">
        <title>Araport11: a complete reannotation of the Arabidopsis thaliana reference genome.</title>
        <authorList>
            <person name="Cheng C.Y."/>
            <person name="Krishnakumar V."/>
            <person name="Chan A.P."/>
            <person name="Thibaud-Nissen F."/>
            <person name="Schobel S."/>
            <person name="Town C.D."/>
        </authorList>
    </citation>
    <scope>GENOME REANNOTATION</scope>
    <source>
        <strain>cv. Columbia</strain>
    </source>
</reference>
<reference key="5">
    <citation type="journal article" date="2003" name="Science">
        <title>Empirical analysis of transcriptional activity in the Arabidopsis genome.</title>
        <authorList>
            <person name="Yamada K."/>
            <person name="Lim J."/>
            <person name="Dale J.M."/>
            <person name="Chen H."/>
            <person name="Shinn P."/>
            <person name="Palm C.J."/>
            <person name="Southwick A.M."/>
            <person name="Wu H.C."/>
            <person name="Kim C.J."/>
            <person name="Nguyen M."/>
            <person name="Pham P.K."/>
            <person name="Cheuk R.F."/>
            <person name="Karlin-Newmann G."/>
            <person name="Liu S.X."/>
            <person name="Lam B."/>
            <person name="Sakano H."/>
            <person name="Wu T."/>
            <person name="Yu G."/>
            <person name="Miranda M."/>
            <person name="Quach H.L."/>
            <person name="Tripp M."/>
            <person name="Chang C.H."/>
            <person name="Lee J.M."/>
            <person name="Toriumi M.J."/>
            <person name="Chan M.M."/>
            <person name="Tang C.C."/>
            <person name="Onodera C.S."/>
            <person name="Deng J.M."/>
            <person name="Akiyama K."/>
            <person name="Ansari Y."/>
            <person name="Arakawa T."/>
            <person name="Banh J."/>
            <person name="Banno F."/>
            <person name="Bowser L."/>
            <person name="Brooks S.Y."/>
            <person name="Carninci P."/>
            <person name="Chao Q."/>
            <person name="Choy N."/>
            <person name="Enju A."/>
            <person name="Goldsmith A.D."/>
            <person name="Gurjal M."/>
            <person name="Hansen N.F."/>
            <person name="Hayashizaki Y."/>
            <person name="Johnson-Hopson C."/>
            <person name="Hsuan V.W."/>
            <person name="Iida K."/>
            <person name="Karnes M."/>
            <person name="Khan S."/>
            <person name="Koesema E."/>
            <person name="Ishida J."/>
            <person name="Jiang P.X."/>
            <person name="Jones T."/>
            <person name="Kawai J."/>
            <person name="Kamiya A."/>
            <person name="Meyers C."/>
            <person name="Nakajima M."/>
            <person name="Narusaka M."/>
            <person name="Seki M."/>
            <person name="Sakurai T."/>
            <person name="Satou M."/>
            <person name="Tamse R."/>
            <person name="Vaysberg M."/>
            <person name="Wallender E.K."/>
            <person name="Wong C."/>
            <person name="Yamamura Y."/>
            <person name="Yuan S."/>
            <person name="Shinozaki K."/>
            <person name="Davis R.W."/>
            <person name="Theologis A."/>
            <person name="Ecker J.R."/>
        </authorList>
    </citation>
    <scope>NUCLEOTIDE SEQUENCE [LARGE SCALE MRNA]</scope>
    <source>
        <strain>cv. Columbia</strain>
    </source>
</reference>
<reference key="6">
    <citation type="submission" date="2002-03" db="EMBL/GenBank/DDBJ databases">
        <title>Full-length cDNA from Arabidopsis thaliana.</title>
        <authorList>
            <person name="Brover V.V."/>
            <person name="Troukhan M.E."/>
            <person name="Alexandrov N.A."/>
            <person name="Lu Y.-P."/>
            <person name="Flavell R.B."/>
            <person name="Feldmann K.A."/>
        </authorList>
    </citation>
    <scope>NUCLEOTIDE SEQUENCE [LARGE SCALE MRNA]</scope>
</reference>
<reference key="7">
    <citation type="journal article" date="1999" name="Mol. Biol. Rep.">
        <title>Structure and functional analyses of the 26S proteasome subunits from plants.</title>
        <authorList>
            <person name="Fu H."/>
            <person name="Girod P.-A."/>
            <person name="Doelling J.H."/>
            <person name="van Nocker S."/>
            <person name="Hochstrasser M."/>
            <person name="Finley D."/>
            <person name="Vierstra R.D."/>
        </authorList>
    </citation>
    <scope>SUBUNIT</scope>
</reference>
<reference key="8">
    <citation type="journal article" date="2004" name="J. Biol. Chem.">
        <title>Purification of the Arabidopsis 26 S proteasome: biochemical and molecular analyses revealed the presence of multiple isoforms.</title>
        <authorList>
            <person name="Yang P."/>
            <person name="Fu H."/>
            <person name="Walker J."/>
            <person name="Papa C.M."/>
            <person name="Smalle J."/>
            <person name="Ju Y.-M."/>
            <person name="Vierstra R.D."/>
        </authorList>
    </citation>
    <scope>SUBUNIT</scope>
    <scope>IDENTIFICATION BY MASS SPECTROMETRY</scope>
</reference>
<reference key="9">
    <citation type="journal article" date="2010" name="J. Biol. Chem.">
        <title>Affinity purification of the Arabidopsis 26 S proteasome reveals a diverse array of plant proteolytic complexes.</title>
        <authorList>
            <person name="Book A.J."/>
            <person name="Gladman N.P."/>
            <person name="Lee S.S."/>
            <person name="Scalf M."/>
            <person name="Smith L.M."/>
            <person name="Vierstra R.D."/>
        </authorList>
    </citation>
    <scope>IDENTIFICATION BY MASS SPECTROMETRY</scope>
    <scope>CHARACTERIZATION OF THE 26S PROTEASOME COMPLEX</scope>
    <scope>SUBUNIT</scope>
</reference>